<comment type="function">
    <text evidence="1">Catalyzes the reversible formation of fructose 6-phosphate from dihydroxyacetone and D-glyceraldehyde 3-phosphate via an aldolization reaction.</text>
</comment>
<comment type="catalytic activity">
    <reaction evidence="1">
        <text>beta-D-fructose 6-phosphate = dihydroxyacetone + D-glyceraldehyde 3-phosphate</text>
        <dbReference type="Rhea" id="RHEA:28002"/>
        <dbReference type="ChEBI" id="CHEBI:16016"/>
        <dbReference type="ChEBI" id="CHEBI:57634"/>
        <dbReference type="ChEBI" id="CHEBI:59776"/>
    </reaction>
</comment>
<comment type="subunit">
    <text evidence="1">Homodecamer.</text>
</comment>
<comment type="subcellular location">
    <subcellularLocation>
        <location evidence="1">Cytoplasm</location>
    </subcellularLocation>
</comment>
<comment type="similarity">
    <text evidence="1">Belongs to the transaldolase family. Type 3A subfamily.</text>
</comment>
<evidence type="ECO:0000255" key="1">
    <source>
        <dbReference type="HAMAP-Rule" id="MF_00496"/>
    </source>
</evidence>
<sequence>MELYLDTANVAEVERLARIFPIAGVTTNPSIVAASKESIWDVLPRLQNAIGEEGTLFAQTMSRDAKGMVEEAKRLNNAIPGIVVKIPVTAEGLAAIKLLKKEGIVTLGTAVYSASQGLLAALAGAKYVAPYVNRVDAQGGDGIRMVQELQTLLEHHAPDSMVLAASFKTPRQALDCLLAGCQAITLPLDVAQQMLNTPAVESAIEKFEQDWKNAFGNLNL</sequence>
<proteinExistence type="inferred from homology"/>
<gene>
    <name evidence="1" type="primary">fsa</name>
    <name type="ordered locus">SCH_4001</name>
</gene>
<feature type="chain" id="PRO_1000050598" description="Fructose-6-phosphate aldolase">
    <location>
        <begin position="1"/>
        <end position="220"/>
    </location>
</feature>
<feature type="active site" description="Schiff-base intermediate with substrate" evidence="1">
    <location>
        <position position="85"/>
    </location>
</feature>
<keyword id="KW-0119">Carbohydrate metabolism</keyword>
<keyword id="KW-0963">Cytoplasm</keyword>
<keyword id="KW-0456">Lyase</keyword>
<keyword id="KW-0704">Schiff base</keyword>
<protein>
    <recommendedName>
        <fullName evidence="1">Fructose-6-phosphate aldolase</fullName>
        <ecNumber evidence="1">4.1.2.-</ecNumber>
    </recommendedName>
</protein>
<reference key="1">
    <citation type="journal article" date="2005" name="Nucleic Acids Res.">
        <title>The genome sequence of Salmonella enterica serovar Choleraesuis, a highly invasive and resistant zoonotic pathogen.</title>
        <authorList>
            <person name="Chiu C.-H."/>
            <person name="Tang P."/>
            <person name="Chu C."/>
            <person name="Hu S."/>
            <person name="Bao Q."/>
            <person name="Yu J."/>
            <person name="Chou Y.-Y."/>
            <person name="Wang H.-S."/>
            <person name="Lee Y.-S."/>
        </authorList>
    </citation>
    <scope>NUCLEOTIDE SEQUENCE [LARGE SCALE GENOMIC DNA]</scope>
    <source>
        <strain>SC-B67</strain>
    </source>
</reference>
<name>FSA_SALCH</name>
<organism>
    <name type="scientific">Salmonella choleraesuis (strain SC-B67)</name>
    <dbReference type="NCBI Taxonomy" id="321314"/>
    <lineage>
        <taxon>Bacteria</taxon>
        <taxon>Pseudomonadati</taxon>
        <taxon>Pseudomonadota</taxon>
        <taxon>Gammaproteobacteria</taxon>
        <taxon>Enterobacterales</taxon>
        <taxon>Enterobacteriaceae</taxon>
        <taxon>Salmonella</taxon>
    </lineage>
</organism>
<dbReference type="EC" id="4.1.2.-" evidence="1"/>
<dbReference type="EMBL" id="AE017220">
    <property type="protein sequence ID" value="AAX67907.1"/>
    <property type="molecule type" value="Genomic_DNA"/>
</dbReference>
<dbReference type="RefSeq" id="WP_000424866.1">
    <property type="nucleotide sequence ID" value="NC_006905.1"/>
</dbReference>
<dbReference type="SMR" id="Q57HA5"/>
<dbReference type="KEGG" id="sec:SCH_4001"/>
<dbReference type="HOGENOM" id="CLU_079764_2_0_6"/>
<dbReference type="Proteomes" id="UP000000538">
    <property type="component" value="Chromosome"/>
</dbReference>
<dbReference type="GO" id="GO:0005737">
    <property type="term" value="C:cytoplasm"/>
    <property type="evidence" value="ECO:0007669"/>
    <property type="project" value="UniProtKB-SubCell"/>
</dbReference>
<dbReference type="GO" id="GO:0097023">
    <property type="term" value="F:fructose 6-phosphate aldolase activity"/>
    <property type="evidence" value="ECO:0007669"/>
    <property type="project" value="RHEA"/>
</dbReference>
<dbReference type="GO" id="GO:0006000">
    <property type="term" value="P:fructose metabolic process"/>
    <property type="evidence" value="ECO:0007669"/>
    <property type="project" value="UniProtKB-UniRule"/>
</dbReference>
<dbReference type="CDD" id="cd00956">
    <property type="entry name" value="Transaldolase_FSA"/>
    <property type="match status" value="1"/>
</dbReference>
<dbReference type="FunFam" id="3.20.20.70:FF:000018">
    <property type="entry name" value="Probable transaldolase"/>
    <property type="match status" value="1"/>
</dbReference>
<dbReference type="Gene3D" id="3.20.20.70">
    <property type="entry name" value="Aldolase class I"/>
    <property type="match status" value="1"/>
</dbReference>
<dbReference type="HAMAP" id="MF_00496">
    <property type="entry name" value="F6P_aldolase"/>
    <property type="match status" value="1"/>
</dbReference>
<dbReference type="InterPro" id="IPR013785">
    <property type="entry name" value="Aldolase_TIM"/>
</dbReference>
<dbReference type="InterPro" id="IPR023001">
    <property type="entry name" value="F6P_aldolase"/>
</dbReference>
<dbReference type="InterPro" id="IPR001585">
    <property type="entry name" value="TAL/FSA"/>
</dbReference>
<dbReference type="InterPro" id="IPR004731">
    <property type="entry name" value="Transaldolase_3B/F6P_aldolase"/>
</dbReference>
<dbReference type="InterPro" id="IPR018225">
    <property type="entry name" value="Transaldolase_AS"/>
</dbReference>
<dbReference type="InterPro" id="IPR033919">
    <property type="entry name" value="TSA/FSA_arc/bac"/>
</dbReference>
<dbReference type="NCBIfam" id="TIGR00875">
    <property type="entry name" value="fsa_talC_mipB"/>
    <property type="match status" value="1"/>
</dbReference>
<dbReference type="NCBIfam" id="NF009296">
    <property type="entry name" value="PRK12653.1"/>
    <property type="match status" value="1"/>
</dbReference>
<dbReference type="PANTHER" id="PTHR10683:SF40">
    <property type="entry name" value="FRUCTOSE-6-PHOSPHATE ALDOLASE 1-RELATED"/>
    <property type="match status" value="1"/>
</dbReference>
<dbReference type="PANTHER" id="PTHR10683">
    <property type="entry name" value="TRANSALDOLASE"/>
    <property type="match status" value="1"/>
</dbReference>
<dbReference type="Pfam" id="PF00923">
    <property type="entry name" value="TAL_FSA"/>
    <property type="match status" value="1"/>
</dbReference>
<dbReference type="SUPFAM" id="SSF51569">
    <property type="entry name" value="Aldolase"/>
    <property type="match status" value="1"/>
</dbReference>
<dbReference type="PROSITE" id="PS01054">
    <property type="entry name" value="TRANSALDOLASE_1"/>
    <property type="match status" value="1"/>
</dbReference>
<dbReference type="PROSITE" id="PS00958">
    <property type="entry name" value="TRANSALDOLASE_2"/>
    <property type="match status" value="1"/>
</dbReference>
<accession>Q57HA5</accession>